<proteinExistence type="evidence at transcript level"/>
<dbReference type="EMBL" id="AJ851766">
    <property type="protein sequence ID" value="CAH65400.1"/>
    <property type="molecule type" value="mRNA"/>
</dbReference>
<dbReference type="RefSeq" id="NP_001012584.1">
    <property type="nucleotide sequence ID" value="NM_001012566.1"/>
</dbReference>
<dbReference type="FunCoup" id="Q5F384">
    <property type="interactions" value="1614"/>
</dbReference>
<dbReference type="STRING" id="9031.ENSGALP00000049593"/>
<dbReference type="GlyCosmos" id="Q5F384">
    <property type="glycosylation" value="1 site, No reported glycans"/>
</dbReference>
<dbReference type="GlyGen" id="Q5F384">
    <property type="glycosylation" value="1 site"/>
</dbReference>
<dbReference type="PaxDb" id="9031-ENSGALP00000016843"/>
<dbReference type="Ensembl" id="ENSGALT00010023213.1">
    <property type="protein sequence ID" value="ENSGALP00010013429.1"/>
    <property type="gene ID" value="ENSGALG00010009719.1"/>
</dbReference>
<dbReference type="GeneID" id="421453"/>
<dbReference type="KEGG" id="gga:421453"/>
<dbReference type="CTD" id="25844"/>
<dbReference type="VEuPathDB" id="HostDB:geneid_421453"/>
<dbReference type="eggNOG" id="KOG3114">
    <property type="taxonomic scope" value="Eukaryota"/>
</dbReference>
<dbReference type="GeneTree" id="ENSGT00940000153766"/>
<dbReference type="InParanoid" id="Q5F384"/>
<dbReference type="OMA" id="HCIVLFV"/>
<dbReference type="OrthoDB" id="10256463at2759"/>
<dbReference type="PhylomeDB" id="Q5F384"/>
<dbReference type="PRO" id="PR:Q5F384"/>
<dbReference type="Proteomes" id="UP000000539">
    <property type="component" value="Chromosome 3"/>
</dbReference>
<dbReference type="Bgee" id="ENSGALG00000041037">
    <property type="expression patterns" value="Expressed in spermatocyte and 12 other cell types or tissues"/>
</dbReference>
<dbReference type="GO" id="GO:0005794">
    <property type="term" value="C:Golgi apparatus"/>
    <property type="evidence" value="ECO:0000318"/>
    <property type="project" value="GO_Central"/>
</dbReference>
<dbReference type="GO" id="GO:0005886">
    <property type="term" value="C:plasma membrane"/>
    <property type="evidence" value="ECO:0007669"/>
    <property type="project" value="UniProtKB-SubCell"/>
</dbReference>
<dbReference type="GO" id="GO:0030133">
    <property type="term" value="C:transport vesicle"/>
    <property type="evidence" value="ECO:0007669"/>
    <property type="project" value="Ensembl"/>
</dbReference>
<dbReference type="GO" id="GO:0030154">
    <property type="term" value="P:cell differentiation"/>
    <property type="evidence" value="ECO:0007669"/>
    <property type="project" value="UniProtKB-KW"/>
</dbReference>
<dbReference type="InterPro" id="IPR051521">
    <property type="entry name" value="tRNA_Mod/Golgi_Maint"/>
</dbReference>
<dbReference type="PANTHER" id="PTHR15627">
    <property type="entry name" value="NATURAL KILLER CELL-SPECIFIC ANTIGEN KLIP1"/>
    <property type="match status" value="1"/>
</dbReference>
<dbReference type="PANTHER" id="PTHR15627:SF14">
    <property type="entry name" value="PROTEIN YIPF3"/>
    <property type="match status" value="1"/>
</dbReference>
<sequence length="336" mass="36943">MSAPGGGRSGPAEWGGFEDNMQGGGSAVIDMENMDDTSGSSFEDMGEMHQRMKEEEEEEAEGEAGAGGEEDGEFLGMKGLQGQLGRQVADQMWQVGKRQASKAFSLYANIDILRPYFDVEPVQVRTRLLESMVPVKMINFPQKIAGELYGPLMLVFTLVAILLHGMKTSDTIIREGTLMGTAIGTCFGYWLGVSSFIYFLAYLCNAQITMVQMLSLLGYGLFGHCITLLVTYNIHFHSLFYIFWLVVGGLSTLRMVAVLVSRTVGHTQRLILCGTLAALHMLFLLYLHFAYHKVVEGILDTLEGPNMPPFQRVARDIPVVSNAVLNTTAKANAMTL</sequence>
<gene>
    <name type="primary">YIPF3</name>
    <name type="ORF">RCJMB04_29b14</name>
</gene>
<feature type="chain" id="PRO_0000244449" description="Protein YIPF3">
    <location>
        <begin position="1"/>
        <end position="336"/>
    </location>
</feature>
<feature type="topological domain" description="Cytoplasmic" evidence="2">
    <location>
        <begin position="1"/>
        <end position="143"/>
    </location>
</feature>
<feature type="transmembrane region" description="Helical" evidence="3">
    <location>
        <begin position="144"/>
        <end position="164"/>
    </location>
</feature>
<feature type="topological domain" description="Lumenal" evidence="5">
    <location>
        <begin position="165"/>
        <end position="182"/>
    </location>
</feature>
<feature type="transmembrane region" description="Helical" evidence="3">
    <location>
        <begin position="183"/>
        <end position="203"/>
    </location>
</feature>
<feature type="topological domain" description="Cytoplasmic" evidence="5">
    <location>
        <begin position="204"/>
        <end position="209"/>
    </location>
</feature>
<feature type="transmembrane region" description="Helical" evidence="3">
    <location>
        <begin position="210"/>
        <end position="230"/>
    </location>
</feature>
<feature type="topological domain" description="Lumenal" evidence="5">
    <location>
        <begin position="231"/>
        <end position="239"/>
    </location>
</feature>
<feature type="transmembrane region" description="Helical" evidence="3">
    <location>
        <begin position="240"/>
        <end position="260"/>
    </location>
</feature>
<feature type="topological domain" description="Cytoplasmic" evidence="5">
    <location>
        <begin position="261"/>
        <end position="269"/>
    </location>
</feature>
<feature type="transmembrane region" description="Helical" evidence="3">
    <location>
        <begin position="270"/>
        <end position="290"/>
    </location>
</feature>
<feature type="topological domain" description="Lumenal" evidence="2">
    <location>
        <begin position="291"/>
        <end position="336"/>
    </location>
</feature>
<feature type="region of interest" description="Disordered" evidence="4">
    <location>
        <begin position="1"/>
        <end position="73"/>
    </location>
</feature>
<feature type="compositionally biased region" description="Acidic residues" evidence="4">
    <location>
        <begin position="55"/>
        <end position="73"/>
    </location>
</feature>
<feature type="glycosylation site" description="N-linked (GlcNAc...) asparagine" evidence="3">
    <location>
        <position position="326"/>
    </location>
</feature>
<comment type="function">
    <text evidence="1">Involved in the maintenance of the Golgi structure. May play a role in hematopoiesis (By similarity).</text>
</comment>
<comment type="subcellular location">
    <subcellularLocation>
        <location evidence="1">Cell membrane</location>
        <topology>Multi-pass membrane protein</topology>
    </subcellularLocation>
    <subcellularLocation>
        <location evidence="1">Golgi apparatus</location>
        <location evidence="1">cis-Golgi network membrane</location>
        <topology>Multi-pass membrane protein</topology>
    </subcellularLocation>
    <subcellularLocation>
        <location evidence="1">Cytoplasm</location>
    </subcellularLocation>
</comment>
<comment type="similarity">
    <text evidence="5">Belongs to the YIP1 family.</text>
</comment>
<name>YIPF3_CHICK</name>
<protein>
    <recommendedName>
        <fullName>Protein YIPF3</fullName>
    </recommendedName>
    <alternativeName>
        <fullName>YIP1 family member 3</fullName>
    </alternativeName>
</protein>
<organism>
    <name type="scientific">Gallus gallus</name>
    <name type="common">Chicken</name>
    <dbReference type="NCBI Taxonomy" id="9031"/>
    <lineage>
        <taxon>Eukaryota</taxon>
        <taxon>Metazoa</taxon>
        <taxon>Chordata</taxon>
        <taxon>Craniata</taxon>
        <taxon>Vertebrata</taxon>
        <taxon>Euteleostomi</taxon>
        <taxon>Archelosauria</taxon>
        <taxon>Archosauria</taxon>
        <taxon>Dinosauria</taxon>
        <taxon>Saurischia</taxon>
        <taxon>Theropoda</taxon>
        <taxon>Coelurosauria</taxon>
        <taxon>Aves</taxon>
        <taxon>Neognathae</taxon>
        <taxon>Galloanserae</taxon>
        <taxon>Galliformes</taxon>
        <taxon>Phasianidae</taxon>
        <taxon>Phasianinae</taxon>
        <taxon>Gallus</taxon>
    </lineage>
</organism>
<accession>Q5F384</accession>
<keyword id="KW-1003">Cell membrane</keyword>
<keyword id="KW-0963">Cytoplasm</keyword>
<keyword id="KW-0221">Differentiation</keyword>
<keyword id="KW-0325">Glycoprotein</keyword>
<keyword id="KW-0333">Golgi apparatus</keyword>
<keyword id="KW-0472">Membrane</keyword>
<keyword id="KW-1185">Reference proteome</keyword>
<keyword id="KW-0812">Transmembrane</keyword>
<keyword id="KW-1133">Transmembrane helix</keyword>
<evidence type="ECO:0000250" key="1"/>
<evidence type="ECO:0000250" key="2">
    <source>
        <dbReference type="UniProtKB" id="Q9GZM5"/>
    </source>
</evidence>
<evidence type="ECO:0000255" key="3"/>
<evidence type="ECO:0000256" key="4">
    <source>
        <dbReference type="SAM" id="MobiDB-lite"/>
    </source>
</evidence>
<evidence type="ECO:0000305" key="5"/>
<reference key="1">
    <citation type="journal article" date="2005" name="Genome Biol.">
        <title>Full-length cDNAs from chicken bursal lymphocytes to facilitate gene function analysis.</title>
        <authorList>
            <person name="Caldwell R.B."/>
            <person name="Kierzek A.M."/>
            <person name="Arakawa H."/>
            <person name="Bezzubov Y."/>
            <person name="Zaim J."/>
            <person name="Fiedler P."/>
            <person name="Kutter S."/>
            <person name="Blagodatski A."/>
            <person name="Kostovska D."/>
            <person name="Koter M."/>
            <person name="Plachy J."/>
            <person name="Carninci P."/>
            <person name="Hayashizaki Y."/>
            <person name="Buerstedde J.-M."/>
        </authorList>
    </citation>
    <scope>NUCLEOTIDE SEQUENCE [LARGE SCALE MRNA]</scope>
    <source>
        <strain>CB</strain>
        <tissue>Bursa of Fabricius</tissue>
    </source>
</reference>